<keyword id="KW-0903">Direct protein sequencing</keyword>
<keyword id="KW-0256">Endoplasmic reticulum</keyword>
<keyword id="KW-1185">Reference proteome</keyword>
<accession>P81628</accession>
<accession>Q5ZIP9</accession>
<evidence type="ECO:0000250" key="1"/>
<protein>
    <recommendedName>
        <fullName>Endoplasmic reticulum resident protein 29</fullName>
        <shortName>ERp29</shortName>
    </recommendedName>
</protein>
<dbReference type="EMBL" id="AJ720735">
    <property type="protein sequence ID" value="CAG32394.1"/>
    <property type="molecule type" value="mRNA"/>
</dbReference>
<dbReference type="RefSeq" id="NP_001263253.1">
    <property type="nucleotide sequence ID" value="NM_001276324.1"/>
</dbReference>
<dbReference type="SMR" id="P81628"/>
<dbReference type="BioGRID" id="678324">
    <property type="interactions" value="1"/>
</dbReference>
<dbReference type="FunCoup" id="P81628">
    <property type="interactions" value="1873"/>
</dbReference>
<dbReference type="IntAct" id="P81628">
    <property type="interactions" value="1"/>
</dbReference>
<dbReference type="STRING" id="9031.ENSGALP00000038209"/>
<dbReference type="PaxDb" id="9031-ENSGALP00000038209"/>
<dbReference type="GeneID" id="416882"/>
<dbReference type="KEGG" id="gga:416882"/>
<dbReference type="CTD" id="10961"/>
<dbReference type="VEuPathDB" id="HostDB:geneid_416882"/>
<dbReference type="eggNOG" id="ENOG502QSHC">
    <property type="taxonomic scope" value="Eukaryota"/>
</dbReference>
<dbReference type="InParanoid" id="P81628"/>
<dbReference type="OrthoDB" id="417262at2759"/>
<dbReference type="PhylomeDB" id="P81628"/>
<dbReference type="Proteomes" id="UP000000539">
    <property type="component" value="Unassembled WGS sequence"/>
</dbReference>
<dbReference type="GO" id="GO:0005783">
    <property type="term" value="C:endoplasmic reticulum"/>
    <property type="evidence" value="ECO:0000318"/>
    <property type="project" value="GO_Central"/>
</dbReference>
<dbReference type="GO" id="GO:0005788">
    <property type="term" value="C:endoplasmic reticulum lumen"/>
    <property type="evidence" value="ECO:0007669"/>
    <property type="project" value="UniProtKB-SubCell"/>
</dbReference>
<dbReference type="GO" id="GO:0009306">
    <property type="term" value="P:protein secretion"/>
    <property type="evidence" value="ECO:0007669"/>
    <property type="project" value="InterPro"/>
</dbReference>
<dbReference type="CDD" id="cd00238">
    <property type="entry name" value="ERp29c"/>
    <property type="match status" value="1"/>
</dbReference>
<dbReference type="CDD" id="cd03007">
    <property type="entry name" value="PDI_a_ERp29_N"/>
    <property type="match status" value="1"/>
</dbReference>
<dbReference type="FunFam" id="1.20.1150.12:FF:000001">
    <property type="entry name" value="Endoplasmic reticulum resident protein 29"/>
    <property type="match status" value="1"/>
</dbReference>
<dbReference type="FunFam" id="3.40.30.10:FF:000133">
    <property type="entry name" value="Endoplasmic reticulum resident protein 29"/>
    <property type="match status" value="1"/>
</dbReference>
<dbReference type="Gene3D" id="1.20.1150.12">
    <property type="entry name" value="Endoplasmic reticulum resident protein 29, C-terminal domain"/>
    <property type="match status" value="1"/>
</dbReference>
<dbReference type="Gene3D" id="3.40.30.10">
    <property type="entry name" value="Glutaredoxin"/>
    <property type="match status" value="1"/>
</dbReference>
<dbReference type="InterPro" id="IPR016855">
    <property type="entry name" value="ERp29"/>
</dbReference>
<dbReference type="InterPro" id="IPR011679">
    <property type="entry name" value="ERp29_C"/>
</dbReference>
<dbReference type="InterPro" id="IPR036356">
    <property type="entry name" value="ERp29_C_sf"/>
</dbReference>
<dbReference type="InterPro" id="IPR012883">
    <property type="entry name" value="ERp29_N"/>
</dbReference>
<dbReference type="InterPro" id="IPR036249">
    <property type="entry name" value="Thioredoxin-like_sf"/>
</dbReference>
<dbReference type="PANTHER" id="PTHR12211">
    <property type="entry name" value="ENDOPLASMIC RETICULUM PROTEIN ERP29"/>
    <property type="match status" value="1"/>
</dbReference>
<dbReference type="PANTHER" id="PTHR12211:SF0">
    <property type="entry name" value="ENDOPLASMIC RETICULUM RESIDENT PROTEIN 29"/>
    <property type="match status" value="1"/>
</dbReference>
<dbReference type="Pfam" id="PF07749">
    <property type="entry name" value="ERp29"/>
    <property type="match status" value="1"/>
</dbReference>
<dbReference type="Pfam" id="PF07912">
    <property type="entry name" value="ERp29_N"/>
    <property type="match status" value="1"/>
</dbReference>
<dbReference type="SUPFAM" id="SSF47933">
    <property type="entry name" value="ERP29 C domain-like"/>
    <property type="match status" value="1"/>
</dbReference>
<dbReference type="SUPFAM" id="SSF52833">
    <property type="entry name" value="Thioredoxin-like"/>
    <property type="match status" value="1"/>
</dbReference>
<proteinExistence type="evidence at protein level"/>
<feature type="chain" id="PRO_0000087031" description="Endoplasmic reticulum resident protein 29">
    <location>
        <begin position="1"/>
        <end position="228" status="greater than"/>
    </location>
</feature>
<feature type="non-terminal residue">
    <location>
        <position position="228"/>
    </location>
</feature>
<reference key="1">
    <citation type="journal article" date="2005" name="Genome Biol.">
        <title>Full-length cDNAs from chicken bursal lymphocytes to facilitate gene function analysis.</title>
        <authorList>
            <person name="Caldwell R.B."/>
            <person name="Kierzek A.M."/>
            <person name="Arakawa H."/>
            <person name="Bezzubov Y."/>
            <person name="Zaim J."/>
            <person name="Fiedler P."/>
            <person name="Kutter S."/>
            <person name="Blagodatski A."/>
            <person name="Kostovska D."/>
            <person name="Koter M."/>
            <person name="Plachy J."/>
            <person name="Carninci P."/>
            <person name="Hayashizaki Y."/>
            <person name="Buerstedde J.-M."/>
        </authorList>
    </citation>
    <scope>NUCLEOTIDE SEQUENCE [LARGE SCALE MRNA]</scope>
    <source>
        <strain>CB</strain>
        <tissue>Bursa of Fabricius</tissue>
    </source>
</reference>
<reference key="2">
    <citation type="submission" date="1998-12" db="UniProtKB">
        <authorList>
            <person name="Hubbard M.J."/>
        </authorList>
    </citation>
    <scope>PROTEIN SEQUENCE OF 24-55</scope>
    <source>
        <tissue>Liver</tissue>
    </source>
</reference>
<name>ERP29_CHICK</name>
<comment type="function">
    <text>Does not seem to be a disulfide isomerase. Plays an important role in the processing of secretory proteins within the endoplasmic reticulum (ER), possibly by participating in the folding of proteins in the ER.</text>
</comment>
<comment type="subunit">
    <text evidence="1">Homodimer.</text>
</comment>
<comment type="subcellular location">
    <subcellularLocation>
        <location>Endoplasmic reticulum lumen</location>
    </subcellularLocation>
</comment>
<sequence length="228" mass="25373">MAAAAAAGSLLLCLLGLALPGSALHTKGSVPLDTITFYKVIPKHKFVLVKFDTQYPYGEKQDEFKKLAESSGSSEDLLVAEVGISDYGDKLNTELGEKYKLDKEKYPIFYLFHDGDFDNPLPYSGHIKAGAIQRWLKSNGIYLGMPGCLKEYDVLASKFMSVTDKSERQSLLKKGQQSLEKAKETEKKSAEQYLKIMSKILEQGEEFAANEVVRITKLIEKTKMSDGK</sequence>
<organism>
    <name type="scientific">Gallus gallus</name>
    <name type="common">Chicken</name>
    <dbReference type="NCBI Taxonomy" id="9031"/>
    <lineage>
        <taxon>Eukaryota</taxon>
        <taxon>Metazoa</taxon>
        <taxon>Chordata</taxon>
        <taxon>Craniata</taxon>
        <taxon>Vertebrata</taxon>
        <taxon>Euteleostomi</taxon>
        <taxon>Archelosauria</taxon>
        <taxon>Archosauria</taxon>
        <taxon>Dinosauria</taxon>
        <taxon>Saurischia</taxon>
        <taxon>Theropoda</taxon>
        <taxon>Coelurosauria</taxon>
        <taxon>Aves</taxon>
        <taxon>Neognathae</taxon>
        <taxon>Galloanserae</taxon>
        <taxon>Galliformes</taxon>
        <taxon>Phasianidae</taxon>
        <taxon>Phasianinae</taxon>
        <taxon>Gallus</taxon>
    </lineage>
</organism>
<gene>
    <name type="primary">ERP29</name>
    <name type="ORF">RCJMB04_24f23</name>
</gene>